<comment type="function">
    <text evidence="1">Regulates arginine biosynthesis genes.</text>
</comment>
<comment type="pathway">
    <text>Amino-acid biosynthesis; L-arginine biosynthesis [regulation].</text>
</comment>
<comment type="subcellular location">
    <subcellularLocation>
        <location evidence="1">Cytoplasm</location>
    </subcellularLocation>
</comment>
<comment type="similarity">
    <text evidence="1">Belongs to the ArgR family.</text>
</comment>
<organism>
    <name type="scientific">Chlorobaculum tepidum (strain ATCC 49652 / DSM 12025 / NBRC 103806 / TLS)</name>
    <name type="common">Chlorobium tepidum</name>
    <dbReference type="NCBI Taxonomy" id="194439"/>
    <lineage>
        <taxon>Bacteria</taxon>
        <taxon>Pseudomonadati</taxon>
        <taxon>Chlorobiota</taxon>
        <taxon>Chlorobiia</taxon>
        <taxon>Chlorobiales</taxon>
        <taxon>Chlorobiaceae</taxon>
        <taxon>Chlorobaculum</taxon>
    </lineage>
</organism>
<feature type="chain" id="PRO_0000205077" description="Arginine repressor">
    <location>
        <begin position="1"/>
        <end position="149"/>
    </location>
</feature>
<reference key="1">
    <citation type="journal article" date="2002" name="Proc. Natl. Acad. Sci. U.S.A.">
        <title>The complete genome sequence of Chlorobium tepidum TLS, a photosynthetic, anaerobic, green-sulfur bacterium.</title>
        <authorList>
            <person name="Eisen J.A."/>
            <person name="Nelson K.E."/>
            <person name="Paulsen I.T."/>
            <person name="Heidelberg J.F."/>
            <person name="Wu M."/>
            <person name="Dodson R.J."/>
            <person name="DeBoy R.T."/>
            <person name="Gwinn M.L."/>
            <person name="Nelson W.C."/>
            <person name="Haft D.H."/>
            <person name="Hickey E.K."/>
            <person name="Peterson J.D."/>
            <person name="Durkin A.S."/>
            <person name="Kolonay J.F."/>
            <person name="Yang F."/>
            <person name="Holt I.E."/>
            <person name="Umayam L.A."/>
            <person name="Mason T.M."/>
            <person name="Brenner M."/>
            <person name="Shea T.P."/>
            <person name="Parksey D.S."/>
            <person name="Nierman W.C."/>
            <person name="Feldblyum T.V."/>
            <person name="Hansen C.L."/>
            <person name="Craven M.B."/>
            <person name="Radune D."/>
            <person name="Vamathevan J.J."/>
            <person name="Khouri H.M."/>
            <person name="White O."/>
            <person name="Gruber T.M."/>
            <person name="Ketchum K.A."/>
            <person name="Venter J.C."/>
            <person name="Tettelin H."/>
            <person name="Bryant D.A."/>
            <person name="Fraser C.M."/>
        </authorList>
    </citation>
    <scope>NUCLEOTIDE SEQUENCE [LARGE SCALE GENOMIC DNA]</scope>
    <source>
        <strain>ATCC 49652 / DSM 12025 / NBRC 103806 / TLS</strain>
    </source>
</reference>
<keyword id="KW-0028">Amino-acid biosynthesis</keyword>
<keyword id="KW-0055">Arginine biosynthesis</keyword>
<keyword id="KW-0963">Cytoplasm</keyword>
<keyword id="KW-0238">DNA-binding</keyword>
<keyword id="KW-1185">Reference proteome</keyword>
<keyword id="KW-0678">Repressor</keyword>
<keyword id="KW-0804">Transcription</keyword>
<keyword id="KW-0805">Transcription regulation</keyword>
<evidence type="ECO:0000255" key="1">
    <source>
        <dbReference type="HAMAP-Rule" id="MF_00173"/>
    </source>
</evidence>
<protein>
    <recommendedName>
        <fullName evidence="1">Arginine repressor</fullName>
    </recommendedName>
</protein>
<proteinExistence type="inferred from homology"/>
<dbReference type="EMBL" id="AE006470">
    <property type="protein sequence ID" value="AAM72346.1"/>
    <property type="molecule type" value="Genomic_DNA"/>
</dbReference>
<dbReference type="RefSeq" id="NP_662004.1">
    <property type="nucleotide sequence ID" value="NC_002932.3"/>
</dbReference>
<dbReference type="RefSeq" id="WP_010932791.1">
    <property type="nucleotide sequence ID" value="NC_002932.3"/>
</dbReference>
<dbReference type="SMR" id="Q8KDE1"/>
<dbReference type="STRING" id="194439.CT1113"/>
<dbReference type="EnsemblBacteria" id="AAM72346">
    <property type="protein sequence ID" value="AAM72346"/>
    <property type="gene ID" value="CT1113"/>
</dbReference>
<dbReference type="KEGG" id="cte:CT1113"/>
<dbReference type="PATRIC" id="fig|194439.7.peg.1011"/>
<dbReference type="eggNOG" id="COG1438">
    <property type="taxonomic scope" value="Bacteria"/>
</dbReference>
<dbReference type="HOGENOM" id="CLU_097103_3_0_10"/>
<dbReference type="OrthoDB" id="9807089at2"/>
<dbReference type="UniPathway" id="UPA00068"/>
<dbReference type="Proteomes" id="UP000001007">
    <property type="component" value="Chromosome"/>
</dbReference>
<dbReference type="GO" id="GO:0005737">
    <property type="term" value="C:cytoplasm"/>
    <property type="evidence" value="ECO:0007669"/>
    <property type="project" value="UniProtKB-SubCell"/>
</dbReference>
<dbReference type="GO" id="GO:0034618">
    <property type="term" value="F:arginine binding"/>
    <property type="evidence" value="ECO:0007669"/>
    <property type="project" value="InterPro"/>
</dbReference>
<dbReference type="GO" id="GO:0003677">
    <property type="term" value="F:DNA binding"/>
    <property type="evidence" value="ECO:0007669"/>
    <property type="project" value="UniProtKB-KW"/>
</dbReference>
<dbReference type="GO" id="GO:0003700">
    <property type="term" value="F:DNA-binding transcription factor activity"/>
    <property type="evidence" value="ECO:0007669"/>
    <property type="project" value="UniProtKB-UniRule"/>
</dbReference>
<dbReference type="GO" id="GO:0006526">
    <property type="term" value="P:L-arginine biosynthetic process"/>
    <property type="evidence" value="ECO:0007669"/>
    <property type="project" value="UniProtKB-UniPathway"/>
</dbReference>
<dbReference type="GO" id="GO:0051259">
    <property type="term" value="P:protein complex oligomerization"/>
    <property type="evidence" value="ECO:0007669"/>
    <property type="project" value="InterPro"/>
</dbReference>
<dbReference type="GO" id="GO:1900079">
    <property type="term" value="P:regulation of arginine biosynthetic process"/>
    <property type="evidence" value="ECO:0007669"/>
    <property type="project" value="UniProtKB-UniRule"/>
</dbReference>
<dbReference type="Gene3D" id="3.30.1360.40">
    <property type="match status" value="1"/>
</dbReference>
<dbReference type="Gene3D" id="1.10.10.10">
    <property type="entry name" value="Winged helix-like DNA-binding domain superfamily/Winged helix DNA-binding domain"/>
    <property type="match status" value="1"/>
</dbReference>
<dbReference type="HAMAP" id="MF_00173">
    <property type="entry name" value="Arg_repressor"/>
    <property type="match status" value="1"/>
</dbReference>
<dbReference type="InterPro" id="IPR001669">
    <property type="entry name" value="Arg_repress"/>
</dbReference>
<dbReference type="InterPro" id="IPR020899">
    <property type="entry name" value="Arg_repress_C"/>
</dbReference>
<dbReference type="InterPro" id="IPR036251">
    <property type="entry name" value="Arg_repress_C_sf"/>
</dbReference>
<dbReference type="InterPro" id="IPR020900">
    <property type="entry name" value="Arg_repress_DNA-bd"/>
</dbReference>
<dbReference type="InterPro" id="IPR036388">
    <property type="entry name" value="WH-like_DNA-bd_sf"/>
</dbReference>
<dbReference type="InterPro" id="IPR036390">
    <property type="entry name" value="WH_DNA-bd_sf"/>
</dbReference>
<dbReference type="PANTHER" id="PTHR34471">
    <property type="entry name" value="ARGININE REPRESSOR"/>
    <property type="match status" value="1"/>
</dbReference>
<dbReference type="PANTHER" id="PTHR34471:SF1">
    <property type="entry name" value="ARGININE REPRESSOR"/>
    <property type="match status" value="1"/>
</dbReference>
<dbReference type="Pfam" id="PF01316">
    <property type="entry name" value="Arg_repressor"/>
    <property type="match status" value="1"/>
</dbReference>
<dbReference type="Pfam" id="PF02863">
    <property type="entry name" value="Arg_repressor_C"/>
    <property type="match status" value="1"/>
</dbReference>
<dbReference type="PRINTS" id="PR01467">
    <property type="entry name" value="ARGREPRESSOR"/>
</dbReference>
<dbReference type="SUPFAM" id="SSF55252">
    <property type="entry name" value="C-terminal domain of arginine repressor"/>
    <property type="match status" value="1"/>
</dbReference>
<dbReference type="SUPFAM" id="SSF46785">
    <property type="entry name" value="Winged helix' DNA-binding domain"/>
    <property type="match status" value="1"/>
</dbReference>
<gene>
    <name evidence="1" type="primary">argR</name>
    <name type="ordered locus">CT1113</name>
</gene>
<accession>Q8KDE1</accession>
<name>ARGR_CHLTE</name>
<sequence>MNKASRQKKIRELIENHEVSGQQELLGMLEKEGIVVAQATLSRDFAEMGVVRNRTSDGGYRLAVPEEPQVDIIKGLVGMEVLSVASNETSIIIRTLPGRAHGVGSFLDRLTNDNILGTIAGDDTVLVIPSTVRKISSVKSYIQKILSQP</sequence>